<gene>
    <name type="primary">IFNG</name>
</gene>
<evidence type="ECO:0000250" key="1"/>
<evidence type="ECO:0000255" key="2"/>
<evidence type="ECO:0000305" key="3"/>
<reference key="1">
    <citation type="journal article" date="1999" name="J. Virol.">
        <title>Recombinant duck interferon gamma inhibits duck hepatitis B virus replication in primary hepatocytes.</title>
        <authorList>
            <person name="Schultz U."/>
            <person name="Chisari F.V."/>
        </authorList>
    </citation>
    <scope>NUCLEOTIDE SEQUENCE [MRNA]</scope>
</reference>
<reference key="2">
    <citation type="submission" date="1998-10" db="EMBL/GenBank/DDBJ databases">
        <title>Cloning and expression of duck interferon-gamma.</title>
        <authorList>
            <person name="Huang A."/>
            <person name="Jilbert A.R."/>
            <person name="Kotlarski I."/>
            <person name="Miller D.S."/>
            <person name="Scougall C.A."/>
            <person name="Burrell C.J."/>
        </authorList>
    </citation>
    <scope>NUCLEOTIDE SEQUENCE [MRNA]</scope>
</reference>
<protein>
    <recommendedName>
        <fullName>Interferon gamma</fullName>
        <shortName>IFN-gamma</shortName>
    </recommendedName>
</protein>
<accession>Q9YGB9</accession>
<sequence>MTCQTYCLFVLSVIMIYFGCSGSALFLGQLQNDIDKLKADFNASNSDVADGNPVFIEKVKNWTERNEKRIILSQIVTLYLEMLKKTDMSKPHIKNLSEQLNTLRNTLSNDYKKFRDLVELSNLQLTGLKIQRKAVSELFSVLQKLVETSTSKRKRSQSPKRCRC</sequence>
<feature type="signal peptide" evidence="2">
    <location>
        <begin position="1"/>
        <end position="19"/>
    </location>
</feature>
<feature type="chain" id="PRO_0000016462" description="Interferon gamma">
    <location>
        <begin position="20"/>
        <end position="164"/>
    </location>
</feature>
<feature type="glycosylation site" description="N-linked (GlcNAc...) asparagine" evidence="2">
    <location>
        <position position="42"/>
    </location>
</feature>
<feature type="glycosylation site" description="N-linked (GlcNAc...) asparagine" evidence="2">
    <location>
        <position position="61"/>
    </location>
</feature>
<feature type="glycosylation site" description="N-linked (GlcNAc...) asparagine" evidence="2">
    <location>
        <position position="95"/>
    </location>
</feature>
<keyword id="KW-0051">Antiviral defense</keyword>
<keyword id="KW-0202">Cytokine</keyword>
<keyword id="KW-0325">Glycoprotein</keyword>
<keyword id="KW-0341">Growth regulation</keyword>
<keyword id="KW-0964">Secreted</keyword>
<keyword id="KW-0732">Signal</keyword>
<name>IFNG_ANAPL</name>
<comment type="function">
    <text>Produced by lymphocytes activated by specific antigens or mitogens. IFN-gamma, in addition to having antiviral activity, has important immunoregulatory functions. It is a potent activator of macrophages, it has antiproliferative effects on transformed cells and it can potentiate the antiviral and antitumor effects of the type I interferons.</text>
</comment>
<comment type="subunit">
    <text evidence="1">Homodimer.</text>
</comment>
<comment type="subcellular location">
    <subcellularLocation>
        <location>Secreted</location>
    </subcellularLocation>
</comment>
<comment type="similarity">
    <text evidence="3">Belongs to the type II (or gamma) interferon family.</text>
</comment>
<dbReference type="EMBL" id="AF087134">
    <property type="protein sequence ID" value="AAD05221.1"/>
    <property type="molecule type" value="mRNA"/>
</dbReference>
<dbReference type="EMBL" id="AF100929">
    <property type="protein sequence ID" value="AAC72980.1"/>
    <property type="molecule type" value="mRNA"/>
</dbReference>
<dbReference type="EMBL" id="AJ012254">
    <property type="protein sequence ID" value="CAA09967.1"/>
    <property type="molecule type" value="mRNA"/>
</dbReference>
<dbReference type="RefSeq" id="NP_001297346.1">
    <property type="nucleotide sequence ID" value="NM_001310417.1"/>
</dbReference>
<dbReference type="SMR" id="Q9YGB9"/>
<dbReference type="GlyCosmos" id="Q9YGB9">
    <property type="glycosylation" value="3 sites, No reported glycans"/>
</dbReference>
<dbReference type="Ensembl" id="ENSAPLT00020016264.1">
    <property type="protein sequence ID" value="ENSAPLP00020015099.1"/>
    <property type="gene ID" value="ENSAPLG00020010948.1"/>
</dbReference>
<dbReference type="GeneID" id="101790439"/>
<dbReference type="KEGG" id="apla:101790439"/>
<dbReference type="CTD" id="3458"/>
<dbReference type="HOGENOM" id="CLU_135106_0_0_1"/>
<dbReference type="OMA" id="QIVSMYL"/>
<dbReference type="OrthoDB" id="9937106at2759"/>
<dbReference type="Proteomes" id="UP000694400">
    <property type="component" value="Chromosome 1"/>
</dbReference>
<dbReference type="GO" id="GO:0005615">
    <property type="term" value="C:extracellular space"/>
    <property type="evidence" value="ECO:0007669"/>
    <property type="project" value="UniProtKB-KW"/>
</dbReference>
<dbReference type="GO" id="GO:0005125">
    <property type="term" value="F:cytokine activity"/>
    <property type="evidence" value="ECO:0007669"/>
    <property type="project" value="UniProtKB-KW"/>
</dbReference>
<dbReference type="GO" id="GO:0005133">
    <property type="term" value="F:type II interferon receptor binding"/>
    <property type="evidence" value="ECO:0007669"/>
    <property type="project" value="InterPro"/>
</dbReference>
<dbReference type="GO" id="GO:0002250">
    <property type="term" value="P:adaptive immune response"/>
    <property type="evidence" value="ECO:0007669"/>
    <property type="project" value="TreeGrafter"/>
</dbReference>
<dbReference type="GO" id="GO:0051607">
    <property type="term" value="P:defense response to virus"/>
    <property type="evidence" value="ECO:0007669"/>
    <property type="project" value="UniProtKB-KW"/>
</dbReference>
<dbReference type="GO" id="GO:0006959">
    <property type="term" value="P:humoral immune response"/>
    <property type="evidence" value="ECO:0007669"/>
    <property type="project" value="TreeGrafter"/>
</dbReference>
<dbReference type="GO" id="GO:0002281">
    <property type="term" value="P:macrophage activation involved in immune response"/>
    <property type="evidence" value="ECO:0000304"/>
    <property type="project" value="AgBase"/>
</dbReference>
<dbReference type="FunFam" id="1.20.1250.10:FF:000007">
    <property type="entry name" value="Interferon gamma"/>
    <property type="match status" value="1"/>
</dbReference>
<dbReference type="Gene3D" id="1.20.1250.10">
    <property type="match status" value="1"/>
</dbReference>
<dbReference type="InterPro" id="IPR009079">
    <property type="entry name" value="4_helix_cytokine-like_core"/>
</dbReference>
<dbReference type="InterPro" id="IPR002069">
    <property type="entry name" value="Interferon_gamma"/>
</dbReference>
<dbReference type="PANTHER" id="PTHR11419">
    <property type="entry name" value="INTERFERON GAMMA"/>
    <property type="match status" value="1"/>
</dbReference>
<dbReference type="PANTHER" id="PTHR11419:SF0">
    <property type="entry name" value="INTERFERON GAMMA"/>
    <property type="match status" value="1"/>
</dbReference>
<dbReference type="Pfam" id="PF00714">
    <property type="entry name" value="IFN-gamma"/>
    <property type="match status" value="1"/>
</dbReference>
<dbReference type="PIRSF" id="PIRSF001936">
    <property type="entry name" value="IFN-gamma"/>
    <property type="match status" value="1"/>
</dbReference>
<dbReference type="SUPFAM" id="SSF47266">
    <property type="entry name" value="4-helical cytokines"/>
    <property type="match status" value="1"/>
</dbReference>
<organism>
    <name type="scientific">Anas platyrhynchos</name>
    <name type="common">Mallard</name>
    <name type="synonym">Anas boschas</name>
    <dbReference type="NCBI Taxonomy" id="8839"/>
    <lineage>
        <taxon>Eukaryota</taxon>
        <taxon>Metazoa</taxon>
        <taxon>Chordata</taxon>
        <taxon>Craniata</taxon>
        <taxon>Vertebrata</taxon>
        <taxon>Euteleostomi</taxon>
        <taxon>Archelosauria</taxon>
        <taxon>Archosauria</taxon>
        <taxon>Dinosauria</taxon>
        <taxon>Saurischia</taxon>
        <taxon>Theropoda</taxon>
        <taxon>Coelurosauria</taxon>
        <taxon>Aves</taxon>
        <taxon>Neognathae</taxon>
        <taxon>Galloanserae</taxon>
        <taxon>Anseriformes</taxon>
        <taxon>Anatidae</taxon>
        <taxon>Anatinae</taxon>
        <taxon>Anas</taxon>
    </lineage>
</organism>
<proteinExistence type="evidence at transcript level"/>